<organism>
    <name type="scientific">Francisella tularensis subsp. novicida (strain U112)</name>
    <dbReference type="NCBI Taxonomy" id="401614"/>
    <lineage>
        <taxon>Bacteria</taxon>
        <taxon>Pseudomonadati</taxon>
        <taxon>Pseudomonadota</taxon>
        <taxon>Gammaproteobacteria</taxon>
        <taxon>Thiotrichales</taxon>
        <taxon>Francisellaceae</taxon>
        <taxon>Francisella</taxon>
    </lineage>
</organism>
<gene>
    <name evidence="1" type="primary">coq7</name>
    <name type="ordered locus">FTN_0978</name>
</gene>
<keyword id="KW-1003">Cell membrane</keyword>
<keyword id="KW-0408">Iron</keyword>
<keyword id="KW-0472">Membrane</keyword>
<keyword id="KW-0479">Metal-binding</keyword>
<keyword id="KW-0503">Monooxygenase</keyword>
<keyword id="KW-0560">Oxidoreductase</keyword>
<keyword id="KW-0831">Ubiquinone biosynthesis</keyword>
<name>COQ7_FRATN</name>
<accession>A0Q6K1</accession>
<reference key="1">
    <citation type="journal article" date="2007" name="Genome Biol.">
        <title>Comparison of Francisella tularensis genomes reveals evolutionary events associated with the emergence of human pathogenic strains.</title>
        <authorList>
            <person name="Rohmer L."/>
            <person name="Fong C."/>
            <person name="Abmayr S."/>
            <person name="Wasnick M."/>
            <person name="Larson Freeman T.J."/>
            <person name="Radey M."/>
            <person name="Guina T."/>
            <person name="Svensson K."/>
            <person name="Hayden H.S."/>
            <person name="Jacobs M."/>
            <person name="Gallagher L.A."/>
            <person name="Manoil C."/>
            <person name="Ernst R.K."/>
            <person name="Drees B."/>
            <person name="Buckley D."/>
            <person name="Haugen E."/>
            <person name="Bovee D."/>
            <person name="Zhou Y."/>
            <person name="Chang J."/>
            <person name="Levy R."/>
            <person name="Lim R."/>
            <person name="Gillett W."/>
            <person name="Guenthener D."/>
            <person name="Kang A."/>
            <person name="Shaffer S.A."/>
            <person name="Taylor G."/>
            <person name="Chen J."/>
            <person name="Gallis B."/>
            <person name="D'Argenio D.A."/>
            <person name="Forsman M."/>
            <person name="Olson M.V."/>
            <person name="Goodlett D.R."/>
            <person name="Kaul R."/>
            <person name="Miller S.I."/>
            <person name="Brittnacher M.J."/>
        </authorList>
    </citation>
    <scope>NUCLEOTIDE SEQUENCE [LARGE SCALE GENOMIC DNA]</scope>
    <source>
        <strain>U112</strain>
    </source>
</reference>
<evidence type="ECO:0000255" key="1">
    <source>
        <dbReference type="HAMAP-Rule" id="MF_01658"/>
    </source>
</evidence>
<proteinExistence type="inferred from homology"/>
<dbReference type="EC" id="1.14.99.60" evidence="1"/>
<dbReference type="EMBL" id="CP000439">
    <property type="protein sequence ID" value="ABK89866.1"/>
    <property type="molecule type" value="Genomic_DNA"/>
</dbReference>
<dbReference type="RefSeq" id="WP_003039390.1">
    <property type="nucleotide sequence ID" value="NZ_CP009633.1"/>
</dbReference>
<dbReference type="SMR" id="A0Q6K1"/>
<dbReference type="KEGG" id="ftn:FTN_0978"/>
<dbReference type="KEGG" id="ftx:AW25_1034"/>
<dbReference type="BioCyc" id="FTUL401614:G1G75-1018-MONOMER"/>
<dbReference type="UniPathway" id="UPA00232"/>
<dbReference type="Proteomes" id="UP000000762">
    <property type="component" value="Chromosome"/>
</dbReference>
<dbReference type="GO" id="GO:0005886">
    <property type="term" value="C:plasma membrane"/>
    <property type="evidence" value="ECO:0007669"/>
    <property type="project" value="UniProtKB-SubCell"/>
</dbReference>
<dbReference type="GO" id="GO:0008682">
    <property type="term" value="F:3-demethoxyubiquinol 3-hydroxylase activity"/>
    <property type="evidence" value="ECO:0007669"/>
    <property type="project" value="UniProtKB-EC"/>
</dbReference>
<dbReference type="GO" id="GO:0046872">
    <property type="term" value="F:metal ion binding"/>
    <property type="evidence" value="ECO:0007669"/>
    <property type="project" value="UniProtKB-KW"/>
</dbReference>
<dbReference type="GO" id="GO:0006744">
    <property type="term" value="P:ubiquinone biosynthetic process"/>
    <property type="evidence" value="ECO:0007669"/>
    <property type="project" value="UniProtKB-UniRule"/>
</dbReference>
<dbReference type="CDD" id="cd01042">
    <property type="entry name" value="DMQH"/>
    <property type="match status" value="1"/>
</dbReference>
<dbReference type="Gene3D" id="1.20.1260.10">
    <property type="match status" value="1"/>
</dbReference>
<dbReference type="HAMAP" id="MF_01658">
    <property type="entry name" value="COQ7"/>
    <property type="match status" value="1"/>
</dbReference>
<dbReference type="InterPro" id="IPR047809">
    <property type="entry name" value="COQ7_proteobact"/>
</dbReference>
<dbReference type="InterPro" id="IPR012347">
    <property type="entry name" value="Ferritin-like"/>
</dbReference>
<dbReference type="InterPro" id="IPR009078">
    <property type="entry name" value="Ferritin-like_SF"/>
</dbReference>
<dbReference type="InterPro" id="IPR011566">
    <property type="entry name" value="Ubq_synth_Coq7"/>
</dbReference>
<dbReference type="NCBIfam" id="NF033656">
    <property type="entry name" value="DMQ_monoox_COQ7"/>
    <property type="match status" value="1"/>
</dbReference>
<dbReference type="PANTHER" id="PTHR11237:SF4">
    <property type="entry name" value="5-DEMETHOXYUBIQUINONE HYDROXYLASE, MITOCHONDRIAL"/>
    <property type="match status" value="1"/>
</dbReference>
<dbReference type="PANTHER" id="PTHR11237">
    <property type="entry name" value="COENZYME Q10 BIOSYNTHESIS PROTEIN 7"/>
    <property type="match status" value="1"/>
</dbReference>
<dbReference type="Pfam" id="PF03232">
    <property type="entry name" value="COQ7"/>
    <property type="match status" value="1"/>
</dbReference>
<dbReference type="SUPFAM" id="SSF47240">
    <property type="entry name" value="Ferritin-like"/>
    <property type="match status" value="1"/>
</dbReference>
<comment type="function">
    <text evidence="1">Catalyzes the hydroxylation of 2-nonaprenyl-3-methyl-6-methoxy-1,4-benzoquinol during ubiquinone biosynthesis.</text>
</comment>
<comment type="catalytic activity">
    <reaction evidence="1">
        <text>a 5-methoxy-2-methyl-3-(all-trans-polyprenyl)benzene-1,4-diol + AH2 + O2 = a 3-demethylubiquinol + A + H2O</text>
        <dbReference type="Rhea" id="RHEA:50908"/>
        <dbReference type="Rhea" id="RHEA-COMP:10859"/>
        <dbReference type="Rhea" id="RHEA-COMP:10914"/>
        <dbReference type="ChEBI" id="CHEBI:13193"/>
        <dbReference type="ChEBI" id="CHEBI:15377"/>
        <dbReference type="ChEBI" id="CHEBI:15379"/>
        <dbReference type="ChEBI" id="CHEBI:17499"/>
        <dbReference type="ChEBI" id="CHEBI:84167"/>
        <dbReference type="ChEBI" id="CHEBI:84422"/>
        <dbReference type="EC" id="1.14.99.60"/>
    </reaction>
</comment>
<comment type="cofactor">
    <cofactor evidence="1">
        <name>Fe cation</name>
        <dbReference type="ChEBI" id="CHEBI:24875"/>
    </cofactor>
    <text evidence="1">Binds 2 iron ions per subunit.</text>
</comment>
<comment type="pathway">
    <text evidence="1">Cofactor biosynthesis; ubiquinone biosynthesis.</text>
</comment>
<comment type="subcellular location">
    <subcellularLocation>
        <location evidence="1">Cell membrane</location>
        <topology evidence="1">Peripheral membrane protein</topology>
    </subcellularLocation>
</comment>
<comment type="similarity">
    <text evidence="1">Belongs to the COQ7 family.</text>
</comment>
<sequence>MRKLSFLDRVIEELDSYARFTKAPLNPSKKSPSSDTIDGKLSEVEKKHSAGLMRVDYTGEICAQGLYRGQASVAKSPQTKEHLYHAAAEEYDHLAWCGERLQELGARPSLLNPFWYWASFGIGAVAGSISDGLSYGFVVETEKQVMKHLDSHLKSLPMNDNRSREILKQMYIDESEHAVEAEKAGGKKLPKTVKAIMKLQSKVMTTLAYRF</sequence>
<feature type="chain" id="PRO_0000338687" description="3-demethoxyubiquinol 3-hydroxylase">
    <location>
        <begin position="1"/>
        <end position="211"/>
    </location>
</feature>
<feature type="binding site" evidence="1">
    <location>
        <position position="60"/>
    </location>
    <ligand>
        <name>Fe cation</name>
        <dbReference type="ChEBI" id="CHEBI:24875"/>
        <label>1</label>
    </ligand>
</feature>
<feature type="binding site" evidence="1">
    <location>
        <position position="90"/>
    </location>
    <ligand>
        <name>Fe cation</name>
        <dbReference type="ChEBI" id="CHEBI:24875"/>
        <label>1</label>
    </ligand>
</feature>
<feature type="binding site" evidence="1">
    <location>
        <position position="90"/>
    </location>
    <ligand>
        <name>Fe cation</name>
        <dbReference type="ChEBI" id="CHEBI:24875"/>
        <label>2</label>
    </ligand>
</feature>
<feature type="binding site" evidence="1">
    <location>
        <position position="93"/>
    </location>
    <ligand>
        <name>Fe cation</name>
        <dbReference type="ChEBI" id="CHEBI:24875"/>
        <label>1</label>
    </ligand>
</feature>
<feature type="binding site" evidence="1">
    <location>
        <position position="142"/>
    </location>
    <ligand>
        <name>Fe cation</name>
        <dbReference type="ChEBI" id="CHEBI:24875"/>
        <label>2</label>
    </ligand>
</feature>
<feature type="binding site" evidence="1">
    <location>
        <position position="174"/>
    </location>
    <ligand>
        <name>Fe cation</name>
        <dbReference type="ChEBI" id="CHEBI:24875"/>
        <label>1</label>
    </ligand>
</feature>
<feature type="binding site" evidence="1">
    <location>
        <position position="174"/>
    </location>
    <ligand>
        <name>Fe cation</name>
        <dbReference type="ChEBI" id="CHEBI:24875"/>
        <label>2</label>
    </ligand>
</feature>
<feature type="binding site" evidence="1">
    <location>
        <position position="177"/>
    </location>
    <ligand>
        <name>Fe cation</name>
        <dbReference type="ChEBI" id="CHEBI:24875"/>
        <label>2</label>
    </ligand>
</feature>
<protein>
    <recommendedName>
        <fullName evidence="1">3-demethoxyubiquinol 3-hydroxylase</fullName>
        <shortName evidence="1">DMQ hydroxylase</shortName>
        <ecNumber evidence="1">1.14.99.60</ecNumber>
    </recommendedName>
    <alternativeName>
        <fullName evidence="1">2-nonaprenyl-3-methyl-6-methoxy-1,4-benzoquinol hydroxylase</fullName>
    </alternativeName>
</protein>